<name>DCUP_ALISL</name>
<organism>
    <name type="scientific">Aliivibrio salmonicida (strain LFI1238)</name>
    <name type="common">Vibrio salmonicida (strain LFI1238)</name>
    <dbReference type="NCBI Taxonomy" id="316275"/>
    <lineage>
        <taxon>Bacteria</taxon>
        <taxon>Pseudomonadati</taxon>
        <taxon>Pseudomonadota</taxon>
        <taxon>Gammaproteobacteria</taxon>
        <taxon>Vibrionales</taxon>
        <taxon>Vibrionaceae</taxon>
        <taxon>Aliivibrio</taxon>
    </lineage>
</organism>
<feature type="chain" id="PRO_1000099972" description="Uroporphyrinogen decarboxylase">
    <location>
        <begin position="1"/>
        <end position="355"/>
    </location>
</feature>
<feature type="binding site" evidence="1">
    <location>
        <begin position="27"/>
        <end position="31"/>
    </location>
    <ligand>
        <name>substrate</name>
    </ligand>
</feature>
<feature type="binding site" evidence="1">
    <location>
        <position position="77"/>
    </location>
    <ligand>
        <name>substrate</name>
    </ligand>
</feature>
<feature type="binding site" evidence="1">
    <location>
        <position position="154"/>
    </location>
    <ligand>
        <name>substrate</name>
    </ligand>
</feature>
<feature type="binding site" evidence="1">
    <location>
        <position position="209"/>
    </location>
    <ligand>
        <name>substrate</name>
    </ligand>
</feature>
<feature type="binding site" evidence="1">
    <location>
        <position position="328"/>
    </location>
    <ligand>
        <name>substrate</name>
    </ligand>
</feature>
<feature type="site" description="Transition state stabilizer" evidence="1">
    <location>
        <position position="77"/>
    </location>
</feature>
<proteinExistence type="inferred from homology"/>
<evidence type="ECO:0000255" key="1">
    <source>
        <dbReference type="HAMAP-Rule" id="MF_00218"/>
    </source>
</evidence>
<protein>
    <recommendedName>
        <fullName evidence="1">Uroporphyrinogen decarboxylase</fullName>
        <shortName evidence="1">UPD</shortName>
        <shortName evidence="1">URO-D</shortName>
        <ecNumber evidence="1">4.1.1.37</ecNumber>
    </recommendedName>
</protein>
<comment type="function">
    <text evidence="1">Catalyzes the decarboxylation of four acetate groups of uroporphyrinogen-III to yield coproporphyrinogen-III.</text>
</comment>
<comment type="catalytic activity">
    <reaction evidence="1">
        <text>uroporphyrinogen III + 4 H(+) = coproporphyrinogen III + 4 CO2</text>
        <dbReference type="Rhea" id="RHEA:19865"/>
        <dbReference type="ChEBI" id="CHEBI:15378"/>
        <dbReference type="ChEBI" id="CHEBI:16526"/>
        <dbReference type="ChEBI" id="CHEBI:57308"/>
        <dbReference type="ChEBI" id="CHEBI:57309"/>
        <dbReference type="EC" id="4.1.1.37"/>
    </reaction>
</comment>
<comment type="pathway">
    <text evidence="1">Porphyrin-containing compound metabolism; protoporphyrin-IX biosynthesis; coproporphyrinogen-III from 5-aminolevulinate: step 4/4.</text>
</comment>
<comment type="subunit">
    <text evidence="1">Homodimer.</text>
</comment>
<comment type="subcellular location">
    <subcellularLocation>
        <location evidence="1">Cytoplasm</location>
    </subcellularLocation>
</comment>
<comment type="similarity">
    <text evidence="1">Belongs to the uroporphyrinogen decarboxylase family.</text>
</comment>
<keyword id="KW-0963">Cytoplasm</keyword>
<keyword id="KW-0210">Decarboxylase</keyword>
<keyword id="KW-0456">Lyase</keyword>
<keyword id="KW-0627">Porphyrin biosynthesis</keyword>
<dbReference type="EC" id="4.1.1.37" evidence="1"/>
<dbReference type="EMBL" id="FM178379">
    <property type="protein sequence ID" value="CAQ80535.1"/>
    <property type="molecule type" value="Genomic_DNA"/>
</dbReference>
<dbReference type="RefSeq" id="WP_012551280.1">
    <property type="nucleotide sequence ID" value="NC_011312.1"/>
</dbReference>
<dbReference type="SMR" id="B6ENB7"/>
<dbReference type="KEGG" id="vsa:VSAL_I2851"/>
<dbReference type="eggNOG" id="COG0407">
    <property type="taxonomic scope" value="Bacteria"/>
</dbReference>
<dbReference type="HOGENOM" id="CLU_040933_0_0_6"/>
<dbReference type="UniPathway" id="UPA00251">
    <property type="reaction ID" value="UER00321"/>
</dbReference>
<dbReference type="Proteomes" id="UP000001730">
    <property type="component" value="Chromosome 1"/>
</dbReference>
<dbReference type="GO" id="GO:0005829">
    <property type="term" value="C:cytosol"/>
    <property type="evidence" value="ECO:0007669"/>
    <property type="project" value="TreeGrafter"/>
</dbReference>
<dbReference type="GO" id="GO:0004853">
    <property type="term" value="F:uroporphyrinogen decarboxylase activity"/>
    <property type="evidence" value="ECO:0007669"/>
    <property type="project" value="UniProtKB-UniRule"/>
</dbReference>
<dbReference type="GO" id="GO:0019353">
    <property type="term" value="P:protoporphyrinogen IX biosynthetic process from glutamate"/>
    <property type="evidence" value="ECO:0007669"/>
    <property type="project" value="TreeGrafter"/>
</dbReference>
<dbReference type="CDD" id="cd00717">
    <property type="entry name" value="URO-D"/>
    <property type="match status" value="1"/>
</dbReference>
<dbReference type="FunFam" id="3.20.20.210:FF:000001">
    <property type="entry name" value="Uroporphyrinogen decarboxylase"/>
    <property type="match status" value="1"/>
</dbReference>
<dbReference type="Gene3D" id="3.20.20.210">
    <property type="match status" value="1"/>
</dbReference>
<dbReference type="HAMAP" id="MF_00218">
    <property type="entry name" value="URO_D"/>
    <property type="match status" value="1"/>
</dbReference>
<dbReference type="InterPro" id="IPR038071">
    <property type="entry name" value="UROD/MetE-like_sf"/>
</dbReference>
<dbReference type="InterPro" id="IPR006361">
    <property type="entry name" value="Uroporphyrinogen_deCO2ase_HemE"/>
</dbReference>
<dbReference type="InterPro" id="IPR000257">
    <property type="entry name" value="Uroporphyrinogen_deCOase"/>
</dbReference>
<dbReference type="NCBIfam" id="TIGR01464">
    <property type="entry name" value="hemE"/>
    <property type="match status" value="1"/>
</dbReference>
<dbReference type="PANTHER" id="PTHR21091">
    <property type="entry name" value="METHYLTETRAHYDROFOLATE:HOMOCYSTEINE METHYLTRANSFERASE RELATED"/>
    <property type="match status" value="1"/>
</dbReference>
<dbReference type="PANTHER" id="PTHR21091:SF169">
    <property type="entry name" value="UROPORPHYRINOGEN DECARBOXYLASE"/>
    <property type="match status" value="1"/>
</dbReference>
<dbReference type="Pfam" id="PF01208">
    <property type="entry name" value="URO-D"/>
    <property type="match status" value="1"/>
</dbReference>
<dbReference type="SUPFAM" id="SSF51726">
    <property type="entry name" value="UROD/MetE-like"/>
    <property type="match status" value="1"/>
</dbReference>
<dbReference type="PROSITE" id="PS00906">
    <property type="entry name" value="UROD_1"/>
    <property type="match status" value="1"/>
</dbReference>
<dbReference type="PROSITE" id="PS00907">
    <property type="entry name" value="UROD_2"/>
    <property type="match status" value="1"/>
</dbReference>
<reference key="1">
    <citation type="journal article" date="2008" name="BMC Genomics">
        <title>The genome sequence of the fish pathogen Aliivibrio salmonicida strain LFI1238 shows extensive evidence of gene decay.</title>
        <authorList>
            <person name="Hjerde E."/>
            <person name="Lorentzen M.S."/>
            <person name="Holden M.T."/>
            <person name="Seeger K."/>
            <person name="Paulsen S."/>
            <person name="Bason N."/>
            <person name="Churcher C."/>
            <person name="Harris D."/>
            <person name="Norbertczak H."/>
            <person name="Quail M.A."/>
            <person name="Sanders S."/>
            <person name="Thurston S."/>
            <person name="Parkhill J."/>
            <person name="Willassen N.P."/>
            <person name="Thomson N.R."/>
        </authorList>
    </citation>
    <scope>NUCLEOTIDE SEQUENCE [LARGE SCALE GENOMIC DNA]</scope>
    <source>
        <strain>LFI1238</strain>
    </source>
</reference>
<gene>
    <name evidence="1" type="primary">hemE</name>
    <name type="ordered locus">VSAL_I2851</name>
</gene>
<sequence length="355" mass="39507">MTELKNDRYLRALLKQPVDYTPVWMMRQAGRYLPEYKATRAEAGDFMSLCKNAGLASEVTLQPLRRFPLDAAILFSDILTIPDAMGLGLYFEAGEGPKFERPITCKADVDKIGIPDPEGELQYVMNAVRQIRKDLKGEVPLIGFSGSPWTLATYMVEGGSSKAFTKIKKMMYAEPAILHLLLDKLADTVIEYLNAQIKAGAQSVMVFDTWGGVLTPRDYNEFSLRYMHKIVDALIRENEGRRVPVTLFTKNGGMWLEQIAATGCDAIGLDWTINIADAKKRIGDKVALQGNMDPSILYAQPERIRQEVSTILEGFGNEGTGHVFNLGHGIHLDVPPENAGVFVDAVHELSKPYHK</sequence>
<accession>B6ENB7</accession>